<gene>
    <name evidence="1" type="primary">cyaY</name>
    <name type="ordered locus">VFMJ11_2611</name>
</gene>
<comment type="function">
    <text evidence="1">Involved in iron-sulfur (Fe-S) cluster assembly. May act as a regulator of Fe-S biogenesis.</text>
</comment>
<comment type="similarity">
    <text evidence="1">Belongs to the frataxin family.</text>
</comment>
<sequence length="104" mass="12136">MNNTEFHELVDEKLQLLEDMIDDSGADIEPVITGNVLTLEFENRSQIVINKQEPMHEIWLASKSGGFHFSYVDEKWTCSKTGMEFIEMVKEECQKHADEEIEWV</sequence>
<keyword id="KW-0408">Iron</keyword>
<keyword id="KW-0479">Metal-binding</keyword>
<reference key="1">
    <citation type="submission" date="2008-08" db="EMBL/GenBank/DDBJ databases">
        <title>Complete sequence of Vibrio fischeri strain MJ11.</title>
        <authorList>
            <person name="Mandel M.J."/>
            <person name="Stabb E.V."/>
            <person name="Ruby E.G."/>
            <person name="Ferriera S."/>
            <person name="Johnson J."/>
            <person name="Kravitz S."/>
            <person name="Beeson K."/>
            <person name="Sutton G."/>
            <person name="Rogers Y.-H."/>
            <person name="Friedman R."/>
            <person name="Frazier M."/>
            <person name="Venter J.C."/>
        </authorList>
    </citation>
    <scope>NUCLEOTIDE SEQUENCE [LARGE SCALE GENOMIC DNA]</scope>
    <source>
        <strain>MJ11</strain>
    </source>
</reference>
<organism>
    <name type="scientific">Aliivibrio fischeri (strain MJ11)</name>
    <name type="common">Vibrio fischeri</name>
    <dbReference type="NCBI Taxonomy" id="388396"/>
    <lineage>
        <taxon>Bacteria</taxon>
        <taxon>Pseudomonadati</taxon>
        <taxon>Pseudomonadota</taxon>
        <taxon>Gammaproteobacteria</taxon>
        <taxon>Vibrionales</taxon>
        <taxon>Vibrionaceae</taxon>
        <taxon>Aliivibrio</taxon>
    </lineage>
</organism>
<protein>
    <recommendedName>
        <fullName evidence="1">Iron-sulfur cluster assembly protein CyaY</fullName>
    </recommendedName>
</protein>
<proteinExistence type="inferred from homology"/>
<name>CYAY_ALIFM</name>
<evidence type="ECO:0000255" key="1">
    <source>
        <dbReference type="HAMAP-Rule" id="MF_00142"/>
    </source>
</evidence>
<dbReference type="EMBL" id="CP001139">
    <property type="protein sequence ID" value="ACH67319.1"/>
    <property type="molecule type" value="Genomic_DNA"/>
</dbReference>
<dbReference type="RefSeq" id="WP_012534347.1">
    <property type="nucleotide sequence ID" value="NC_011184.1"/>
</dbReference>
<dbReference type="SMR" id="B5FCR3"/>
<dbReference type="KEGG" id="vfm:VFMJ11_2611"/>
<dbReference type="HOGENOM" id="CLU_080880_3_0_6"/>
<dbReference type="Proteomes" id="UP000001857">
    <property type="component" value="Chromosome I"/>
</dbReference>
<dbReference type="GO" id="GO:0005829">
    <property type="term" value="C:cytosol"/>
    <property type="evidence" value="ECO:0007669"/>
    <property type="project" value="TreeGrafter"/>
</dbReference>
<dbReference type="GO" id="GO:0008199">
    <property type="term" value="F:ferric iron binding"/>
    <property type="evidence" value="ECO:0007669"/>
    <property type="project" value="InterPro"/>
</dbReference>
<dbReference type="GO" id="GO:0008198">
    <property type="term" value="F:ferrous iron binding"/>
    <property type="evidence" value="ECO:0007669"/>
    <property type="project" value="TreeGrafter"/>
</dbReference>
<dbReference type="GO" id="GO:0016226">
    <property type="term" value="P:iron-sulfur cluster assembly"/>
    <property type="evidence" value="ECO:0007669"/>
    <property type="project" value="UniProtKB-UniRule"/>
</dbReference>
<dbReference type="CDD" id="cd00503">
    <property type="entry name" value="Frataxin"/>
    <property type="match status" value="1"/>
</dbReference>
<dbReference type="Gene3D" id="3.30.920.10">
    <property type="entry name" value="Frataxin/CyaY"/>
    <property type="match status" value="1"/>
</dbReference>
<dbReference type="HAMAP" id="MF_00142">
    <property type="entry name" value="CyaY"/>
    <property type="match status" value="1"/>
</dbReference>
<dbReference type="InterPro" id="IPR047584">
    <property type="entry name" value="CyaY"/>
</dbReference>
<dbReference type="InterPro" id="IPR002908">
    <property type="entry name" value="Frataxin/CyaY"/>
</dbReference>
<dbReference type="InterPro" id="IPR036524">
    <property type="entry name" value="Frataxin/CyaY_sf"/>
</dbReference>
<dbReference type="InterPro" id="IPR020895">
    <property type="entry name" value="Frataxin_CS"/>
</dbReference>
<dbReference type="NCBIfam" id="TIGR03421">
    <property type="entry name" value="FeS_CyaY"/>
    <property type="match status" value="1"/>
</dbReference>
<dbReference type="PANTHER" id="PTHR16821">
    <property type="entry name" value="FRATAXIN"/>
    <property type="match status" value="1"/>
</dbReference>
<dbReference type="PANTHER" id="PTHR16821:SF2">
    <property type="entry name" value="FRATAXIN, MITOCHONDRIAL"/>
    <property type="match status" value="1"/>
</dbReference>
<dbReference type="Pfam" id="PF01491">
    <property type="entry name" value="Frataxin_Cyay"/>
    <property type="match status" value="1"/>
</dbReference>
<dbReference type="SMART" id="SM01219">
    <property type="entry name" value="Frataxin_Cyay"/>
    <property type="match status" value="1"/>
</dbReference>
<dbReference type="SUPFAM" id="SSF55387">
    <property type="entry name" value="Frataxin/Nqo15-like"/>
    <property type="match status" value="1"/>
</dbReference>
<dbReference type="PROSITE" id="PS01344">
    <property type="entry name" value="FRATAXIN_1"/>
    <property type="match status" value="1"/>
</dbReference>
<dbReference type="PROSITE" id="PS50810">
    <property type="entry name" value="FRATAXIN_2"/>
    <property type="match status" value="1"/>
</dbReference>
<feature type="chain" id="PRO_1000096260" description="Iron-sulfur cluster assembly protein CyaY">
    <location>
        <begin position="1"/>
        <end position="104"/>
    </location>
</feature>
<accession>B5FCR3</accession>